<feature type="chain" id="PRO_1000086106" description="Small ribosomal subunit protein uS3">
    <location>
        <begin position="1"/>
        <end position="265"/>
    </location>
</feature>
<feature type="domain" description="KH type-2" evidence="1">
    <location>
        <begin position="43"/>
        <end position="111"/>
    </location>
</feature>
<feature type="region of interest" description="Disordered" evidence="2">
    <location>
        <begin position="217"/>
        <end position="265"/>
    </location>
</feature>
<feature type="compositionally biased region" description="Basic and acidic residues" evidence="2">
    <location>
        <begin position="226"/>
        <end position="244"/>
    </location>
</feature>
<feature type="compositionally biased region" description="Low complexity" evidence="2">
    <location>
        <begin position="250"/>
        <end position="265"/>
    </location>
</feature>
<protein>
    <recommendedName>
        <fullName evidence="1">Small ribosomal subunit protein uS3</fullName>
    </recommendedName>
    <alternativeName>
        <fullName evidence="3">30S ribosomal protein S3</fullName>
    </alternativeName>
</protein>
<sequence length="265" mass="29553">MGQKVNPYGFRLGITTDHVSRWFSDSTKKGQRYSDYVAEDVRIRTMLKTSLDRAGVARIEIERTRDRVRVDIYTARPGIVIGRRGVEAERIRADLEKLTGKQIQLNILEVKNPEAEAQLVAQGIAEQLAGRVAFRRAMRKGLQGAQRAGAKGVRIQVSGRLGGAEMSRSEFYREGRVPLHTLRANIDYGFYEARTSFGRIGVKVWVYKGDITNKDLAREQANQKSSRPERRNDRSDGRTGDRRTNAPRTAPAAEAAPVAAAGVEA</sequence>
<proteinExistence type="inferred from homology"/>
<gene>
    <name evidence="1" type="primary">rpsC</name>
    <name type="ordered locus">CMS0289</name>
</gene>
<comment type="function">
    <text evidence="1">Binds the lower part of the 30S subunit head. Binds mRNA in the 70S ribosome, positioning it for translation.</text>
</comment>
<comment type="subunit">
    <text evidence="1">Part of the 30S ribosomal subunit. Forms a tight complex with proteins S10 and S14.</text>
</comment>
<comment type="similarity">
    <text evidence="1">Belongs to the universal ribosomal protein uS3 family.</text>
</comment>
<evidence type="ECO:0000255" key="1">
    <source>
        <dbReference type="HAMAP-Rule" id="MF_01309"/>
    </source>
</evidence>
<evidence type="ECO:0000256" key="2">
    <source>
        <dbReference type="SAM" id="MobiDB-lite"/>
    </source>
</evidence>
<evidence type="ECO:0000305" key="3"/>
<dbReference type="EMBL" id="AM849034">
    <property type="protein sequence ID" value="CAQ00410.1"/>
    <property type="molecule type" value="Genomic_DNA"/>
</dbReference>
<dbReference type="RefSeq" id="WP_012039300.1">
    <property type="nucleotide sequence ID" value="NZ_MZMN01000003.1"/>
</dbReference>
<dbReference type="SMR" id="B0RB45"/>
<dbReference type="STRING" id="31964.CMS0289"/>
<dbReference type="GeneID" id="92984323"/>
<dbReference type="KEGG" id="cms:CMS0289"/>
<dbReference type="eggNOG" id="COG0092">
    <property type="taxonomic scope" value="Bacteria"/>
</dbReference>
<dbReference type="HOGENOM" id="CLU_058591_0_2_11"/>
<dbReference type="OrthoDB" id="9806396at2"/>
<dbReference type="Proteomes" id="UP000001318">
    <property type="component" value="Chromosome"/>
</dbReference>
<dbReference type="GO" id="GO:0022627">
    <property type="term" value="C:cytosolic small ribosomal subunit"/>
    <property type="evidence" value="ECO:0007669"/>
    <property type="project" value="TreeGrafter"/>
</dbReference>
<dbReference type="GO" id="GO:0003729">
    <property type="term" value="F:mRNA binding"/>
    <property type="evidence" value="ECO:0007669"/>
    <property type="project" value="UniProtKB-UniRule"/>
</dbReference>
<dbReference type="GO" id="GO:0019843">
    <property type="term" value="F:rRNA binding"/>
    <property type="evidence" value="ECO:0007669"/>
    <property type="project" value="UniProtKB-UniRule"/>
</dbReference>
<dbReference type="GO" id="GO:0003735">
    <property type="term" value="F:structural constituent of ribosome"/>
    <property type="evidence" value="ECO:0007669"/>
    <property type="project" value="InterPro"/>
</dbReference>
<dbReference type="GO" id="GO:0006412">
    <property type="term" value="P:translation"/>
    <property type="evidence" value="ECO:0007669"/>
    <property type="project" value="UniProtKB-UniRule"/>
</dbReference>
<dbReference type="CDD" id="cd02412">
    <property type="entry name" value="KH-II_30S_S3"/>
    <property type="match status" value="1"/>
</dbReference>
<dbReference type="FunFam" id="3.30.1140.32:FF:000002">
    <property type="entry name" value="30S ribosomal protein S3"/>
    <property type="match status" value="1"/>
</dbReference>
<dbReference type="FunFam" id="3.30.300.20:FF:000001">
    <property type="entry name" value="30S ribosomal protein S3"/>
    <property type="match status" value="1"/>
</dbReference>
<dbReference type="Gene3D" id="3.30.300.20">
    <property type="match status" value="1"/>
</dbReference>
<dbReference type="Gene3D" id="3.30.1140.32">
    <property type="entry name" value="Ribosomal protein S3, C-terminal domain"/>
    <property type="match status" value="1"/>
</dbReference>
<dbReference type="HAMAP" id="MF_01309_B">
    <property type="entry name" value="Ribosomal_uS3_B"/>
    <property type="match status" value="1"/>
</dbReference>
<dbReference type="InterPro" id="IPR004087">
    <property type="entry name" value="KH_dom"/>
</dbReference>
<dbReference type="InterPro" id="IPR015946">
    <property type="entry name" value="KH_dom-like_a/b"/>
</dbReference>
<dbReference type="InterPro" id="IPR004044">
    <property type="entry name" value="KH_dom_type_2"/>
</dbReference>
<dbReference type="InterPro" id="IPR009019">
    <property type="entry name" value="KH_sf_prok-type"/>
</dbReference>
<dbReference type="InterPro" id="IPR036419">
    <property type="entry name" value="Ribosomal_S3_C_sf"/>
</dbReference>
<dbReference type="InterPro" id="IPR005704">
    <property type="entry name" value="Ribosomal_uS3_bac-typ"/>
</dbReference>
<dbReference type="InterPro" id="IPR001351">
    <property type="entry name" value="Ribosomal_uS3_C"/>
</dbReference>
<dbReference type="InterPro" id="IPR018280">
    <property type="entry name" value="Ribosomal_uS3_CS"/>
</dbReference>
<dbReference type="NCBIfam" id="TIGR01009">
    <property type="entry name" value="rpsC_bact"/>
    <property type="match status" value="1"/>
</dbReference>
<dbReference type="PANTHER" id="PTHR11760">
    <property type="entry name" value="30S/40S RIBOSOMAL PROTEIN S3"/>
    <property type="match status" value="1"/>
</dbReference>
<dbReference type="PANTHER" id="PTHR11760:SF19">
    <property type="entry name" value="SMALL RIBOSOMAL SUBUNIT PROTEIN US3C"/>
    <property type="match status" value="1"/>
</dbReference>
<dbReference type="Pfam" id="PF07650">
    <property type="entry name" value="KH_2"/>
    <property type="match status" value="1"/>
</dbReference>
<dbReference type="Pfam" id="PF00189">
    <property type="entry name" value="Ribosomal_S3_C"/>
    <property type="match status" value="1"/>
</dbReference>
<dbReference type="SMART" id="SM00322">
    <property type="entry name" value="KH"/>
    <property type="match status" value="1"/>
</dbReference>
<dbReference type="SUPFAM" id="SSF54814">
    <property type="entry name" value="Prokaryotic type KH domain (KH-domain type II)"/>
    <property type="match status" value="1"/>
</dbReference>
<dbReference type="SUPFAM" id="SSF54821">
    <property type="entry name" value="Ribosomal protein S3 C-terminal domain"/>
    <property type="match status" value="1"/>
</dbReference>
<dbReference type="PROSITE" id="PS50823">
    <property type="entry name" value="KH_TYPE_2"/>
    <property type="match status" value="1"/>
</dbReference>
<dbReference type="PROSITE" id="PS00548">
    <property type="entry name" value="RIBOSOMAL_S3"/>
    <property type="match status" value="1"/>
</dbReference>
<accession>B0RB45</accession>
<reference key="1">
    <citation type="journal article" date="2008" name="J. Bacteriol.">
        <title>Genome of the actinomycete plant pathogen Clavibacter michiganensis subsp. sepedonicus suggests recent niche adaptation.</title>
        <authorList>
            <person name="Bentley S.D."/>
            <person name="Corton C."/>
            <person name="Brown S.E."/>
            <person name="Barron A."/>
            <person name="Clark L."/>
            <person name="Doggett J."/>
            <person name="Harris B."/>
            <person name="Ormond D."/>
            <person name="Quail M.A."/>
            <person name="May G."/>
            <person name="Francis D."/>
            <person name="Knudson D."/>
            <person name="Parkhill J."/>
            <person name="Ishimaru C.A."/>
        </authorList>
    </citation>
    <scope>NUCLEOTIDE SEQUENCE [LARGE SCALE GENOMIC DNA]</scope>
    <source>
        <strain>ATCC 33113 / DSM 20744 / JCM 9667 / LMG 2889 / ICMP 2535 / C-1</strain>
    </source>
</reference>
<organism>
    <name type="scientific">Clavibacter sepedonicus</name>
    <name type="common">Clavibacter michiganensis subsp. sepedonicus</name>
    <dbReference type="NCBI Taxonomy" id="31964"/>
    <lineage>
        <taxon>Bacteria</taxon>
        <taxon>Bacillati</taxon>
        <taxon>Actinomycetota</taxon>
        <taxon>Actinomycetes</taxon>
        <taxon>Micrococcales</taxon>
        <taxon>Microbacteriaceae</taxon>
        <taxon>Clavibacter</taxon>
    </lineage>
</organism>
<name>RS3_CLASE</name>
<keyword id="KW-0687">Ribonucleoprotein</keyword>
<keyword id="KW-0689">Ribosomal protein</keyword>
<keyword id="KW-0694">RNA-binding</keyword>
<keyword id="KW-0699">rRNA-binding</keyword>